<reference key="1">
    <citation type="journal article" date="2003" name="Nature">
        <title>Genome sequence of Bacillus cereus and comparative analysis with Bacillus anthracis.</title>
        <authorList>
            <person name="Ivanova N."/>
            <person name="Sorokin A."/>
            <person name="Anderson I."/>
            <person name="Galleron N."/>
            <person name="Candelon B."/>
            <person name="Kapatral V."/>
            <person name="Bhattacharyya A."/>
            <person name="Reznik G."/>
            <person name="Mikhailova N."/>
            <person name="Lapidus A."/>
            <person name="Chu L."/>
            <person name="Mazur M."/>
            <person name="Goltsman E."/>
            <person name="Larsen N."/>
            <person name="D'Souza M."/>
            <person name="Walunas T."/>
            <person name="Grechkin Y."/>
            <person name="Pusch G."/>
            <person name="Haselkorn R."/>
            <person name="Fonstein M."/>
            <person name="Ehrlich S.D."/>
            <person name="Overbeek R."/>
            <person name="Kyrpides N.C."/>
        </authorList>
    </citation>
    <scope>NUCLEOTIDE SEQUENCE [LARGE SCALE GENOMIC DNA]</scope>
    <source>
        <strain>ATCC 14579 / DSM 31 / CCUG 7414 / JCM 2152 / NBRC 15305 / NCIMB 9373 / NCTC 2599 / NRRL B-3711</strain>
    </source>
</reference>
<feature type="chain" id="PRO_0000379156" description="ATP-dependent helicase/deoxyribonuclease subunit B">
    <location>
        <begin position="1"/>
        <end position="1171"/>
    </location>
</feature>
<feature type="domain" description="UvrD-like helicase ATP-binding" evidence="1">
    <location>
        <begin position="1"/>
        <end position="390"/>
    </location>
</feature>
<feature type="domain" description="UvrD-like helicase C-terminal" evidence="1">
    <location>
        <begin position="281"/>
        <end position="587"/>
    </location>
</feature>
<feature type="binding site" evidence="1">
    <location>
        <begin position="8"/>
        <end position="15"/>
    </location>
    <ligand>
        <name>ATP</name>
        <dbReference type="ChEBI" id="CHEBI:30616"/>
    </ligand>
</feature>
<feature type="binding site" evidence="1">
    <location>
        <position position="805"/>
    </location>
    <ligand>
        <name>[4Fe-4S] cluster</name>
        <dbReference type="ChEBI" id="CHEBI:49883"/>
    </ligand>
</feature>
<feature type="binding site" evidence="1">
    <location>
        <position position="1129"/>
    </location>
    <ligand>
        <name>[4Fe-4S] cluster</name>
        <dbReference type="ChEBI" id="CHEBI:49883"/>
    </ligand>
</feature>
<feature type="binding site" evidence="1">
    <location>
        <position position="1132"/>
    </location>
    <ligand>
        <name>[4Fe-4S] cluster</name>
        <dbReference type="ChEBI" id="CHEBI:49883"/>
    </ligand>
</feature>
<feature type="binding site" evidence="1">
    <location>
        <position position="1138"/>
    </location>
    <ligand>
        <name>[4Fe-4S] cluster</name>
        <dbReference type="ChEBI" id="CHEBI:49883"/>
    </ligand>
</feature>
<organism>
    <name type="scientific">Bacillus cereus (strain ATCC 14579 / DSM 31 / CCUG 7414 / JCM 2152 / NBRC 15305 / NCIMB 9373 / NCTC 2599 / NRRL B-3711)</name>
    <dbReference type="NCBI Taxonomy" id="226900"/>
    <lineage>
        <taxon>Bacteria</taxon>
        <taxon>Bacillati</taxon>
        <taxon>Bacillota</taxon>
        <taxon>Bacilli</taxon>
        <taxon>Bacillales</taxon>
        <taxon>Bacillaceae</taxon>
        <taxon>Bacillus</taxon>
        <taxon>Bacillus cereus group</taxon>
    </lineage>
</organism>
<proteinExistence type="inferred from homology"/>
<accession>Q81GQ0</accession>
<sequence length="1171" mass="134145">MSLRFVIGRAGSGKSTLCLREVQEELKQRPRGKTILYLVPEQMTFQTQQALIGSEDVRGSIRAQVFSFSRLAWKVLQEVGGASRLHIDEAGVHMLLRKIVESRKDGLSVFQKAAEQNGFFEHLGSMIAEFKRYNVTPSNVYEMWQQLDAHSSSAEQKLLANKVYDLQLLYDDFERALIGKYLDSEDYLQLLVEKLPQSEYVNGAEIYIDGFHSFSPQELEIVRQLMICGARVTITLTIDEKTLAQPVNELDLFYETTLTYEKIKQVAREEKIEIEKTIPLMEQPRFHSPALAHLEAHYEARPNEKFNGEASVTISTAANLRAEVEGVAREIRKLVADEKYRYRDIAVLLRNGESYYDVMRTLFTDYNIPHFIDEKRPMSHHPLVECIRSALEIISGNWRYDAVFRCVKTELLYPLDVRKEAMREEMDEFENYCLAYGVQGKRWTAEDPWMYRRYRSLDDTNGMITDSEREMEEKINRLRDVVRTPVIRMQKRLKRAGTVMQMCEAVYLFLEELDVPKKLEELRIRAEESGDFLFATDHEQVWEEVMSLLDTFVEMLGEEKMSLSMFTDVMSTGLEALQFANIPPSLDQVLIANIDHSRLSDVRATFIIGVNEGVIPVAPMDEGMLSDEEREVLGAAGIELAPTTRQTLLEEQFVMYQMVTRASEKLYISCPLADEEGKTLLASSFIKKIKRMFPNVKDSFISNDVNDLSRSEQISYVATPEVTLSYVMQHLLTWKRYGFEGNLDFWWDVYNFYVTSDEWKQKSSRVLSSLFYRNRAKKLSTAVSRDLYGDIIKGSVSRMELFNRCAYAHFAQHGLSLRERDIFKLDAPDIGELFHAALKKIADKLLRENRTWADLSIKECEHLSVLVIEEIAPLLQRQILLSSNRHFYLKQKLQQIIFRTSIILREHAKSSGFVPVDLEVPFGMGGTGSLPPMEFSLPNGVKMEVVGRIDRVDKAEDENGTFLRIIDYKSSSKALDLTEVYYGLALQMLTYLDVVTSNAQTWMKKGHAASPAGVLYFHIHNPIVEMKGDATEAEIEKEILKKFKMKGLVLGDADVVRLMDNKLSTGSSDIISAGLKKDGSFSARSSIASEQEFNVLQKYVHHTFENIGKDITEGVIDIAPYKMGNKAACTFCNFKSVCQFDESLEDNQFRSLKDMKDSEAMEKIREEVGGE</sequence>
<dbReference type="EC" id="3.1.-.-" evidence="1"/>
<dbReference type="EMBL" id="AE016877">
    <property type="protein sequence ID" value="AAP08124.1"/>
    <property type="molecule type" value="Genomic_DNA"/>
</dbReference>
<dbReference type="RefSeq" id="NP_830923.1">
    <property type="nucleotide sequence ID" value="NC_004722.1"/>
</dbReference>
<dbReference type="RefSeq" id="WP_000058591.1">
    <property type="nucleotide sequence ID" value="NC_004722.1"/>
</dbReference>
<dbReference type="SMR" id="Q81GQ0"/>
<dbReference type="STRING" id="226900.BC_1137"/>
<dbReference type="KEGG" id="bce:BC1137"/>
<dbReference type="PATRIC" id="fig|226900.8.peg.1100"/>
<dbReference type="HOGENOM" id="CLU_007838_0_0_9"/>
<dbReference type="Proteomes" id="UP000001417">
    <property type="component" value="Chromosome"/>
</dbReference>
<dbReference type="GO" id="GO:0051539">
    <property type="term" value="F:4 iron, 4 sulfur cluster binding"/>
    <property type="evidence" value="ECO:0007669"/>
    <property type="project" value="UniProtKB-KW"/>
</dbReference>
<dbReference type="GO" id="GO:0008409">
    <property type="term" value="F:5'-3' exonuclease activity"/>
    <property type="evidence" value="ECO:0007669"/>
    <property type="project" value="UniProtKB-UniRule"/>
</dbReference>
<dbReference type="GO" id="GO:0005524">
    <property type="term" value="F:ATP binding"/>
    <property type="evidence" value="ECO:0007669"/>
    <property type="project" value="UniProtKB-UniRule"/>
</dbReference>
<dbReference type="GO" id="GO:0003690">
    <property type="term" value="F:double-stranded DNA binding"/>
    <property type="evidence" value="ECO:0007669"/>
    <property type="project" value="UniProtKB-UniRule"/>
</dbReference>
<dbReference type="GO" id="GO:0004386">
    <property type="term" value="F:helicase activity"/>
    <property type="evidence" value="ECO:0007669"/>
    <property type="project" value="UniProtKB-KW"/>
</dbReference>
<dbReference type="GO" id="GO:0046872">
    <property type="term" value="F:metal ion binding"/>
    <property type="evidence" value="ECO:0007669"/>
    <property type="project" value="UniProtKB-KW"/>
</dbReference>
<dbReference type="GO" id="GO:0006310">
    <property type="term" value="P:DNA recombination"/>
    <property type="evidence" value="ECO:0000318"/>
    <property type="project" value="GO_Central"/>
</dbReference>
<dbReference type="GO" id="GO:0000724">
    <property type="term" value="P:double-strand break repair via homologous recombination"/>
    <property type="evidence" value="ECO:0007669"/>
    <property type="project" value="UniProtKB-UniRule"/>
</dbReference>
<dbReference type="FunFam" id="3.40.50.300:FF:001679">
    <property type="entry name" value="ATP-dependent helicase/deoxyribonuclease subunit B"/>
    <property type="match status" value="1"/>
</dbReference>
<dbReference type="FunFam" id="3.40.50.300:FF:001705">
    <property type="entry name" value="ATP-dependent helicase/deoxyribonuclease subunit B"/>
    <property type="match status" value="1"/>
</dbReference>
<dbReference type="FunFam" id="3.40.50.300:FF:001739">
    <property type="entry name" value="ATP-dependent helicase/deoxyribonuclease subunit B"/>
    <property type="match status" value="1"/>
</dbReference>
<dbReference type="FunFam" id="3.90.320.10:FF:000006">
    <property type="entry name" value="ATP-dependent helicase/deoxyribonuclease subunit B"/>
    <property type="match status" value="1"/>
</dbReference>
<dbReference type="Gene3D" id="3.90.320.10">
    <property type="match status" value="1"/>
</dbReference>
<dbReference type="Gene3D" id="6.10.140.1030">
    <property type="match status" value="1"/>
</dbReference>
<dbReference type="Gene3D" id="3.40.50.300">
    <property type="entry name" value="P-loop containing nucleotide triphosphate hydrolases"/>
    <property type="match status" value="4"/>
</dbReference>
<dbReference type="HAMAP" id="MF_01452">
    <property type="entry name" value="AddB_type1"/>
    <property type="match status" value="1"/>
</dbReference>
<dbReference type="InterPro" id="IPR049035">
    <property type="entry name" value="ADDB_N"/>
</dbReference>
<dbReference type="InterPro" id="IPR014140">
    <property type="entry name" value="DNA_helicase_suAddB"/>
</dbReference>
<dbReference type="InterPro" id="IPR014017">
    <property type="entry name" value="DNA_helicase_UvrD-like_C"/>
</dbReference>
<dbReference type="InterPro" id="IPR027417">
    <property type="entry name" value="P-loop_NTPase"/>
</dbReference>
<dbReference type="InterPro" id="IPR011604">
    <property type="entry name" value="PDDEXK-like_dom_sf"/>
</dbReference>
<dbReference type="InterPro" id="IPR038726">
    <property type="entry name" value="PDDEXK_AddAB-type"/>
</dbReference>
<dbReference type="NCBIfam" id="TIGR02773">
    <property type="entry name" value="addB_Gpos"/>
    <property type="match status" value="1"/>
</dbReference>
<dbReference type="PANTHER" id="PTHR30591">
    <property type="entry name" value="RECBCD ENZYME SUBUNIT RECC"/>
    <property type="match status" value="1"/>
</dbReference>
<dbReference type="PANTHER" id="PTHR30591:SF1">
    <property type="entry name" value="RECBCD ENZYME SUBUNIT RECC"/>
    <property type="match status" value="1"/>
</dbReference>
<dbReference type="Pfam" id="PF21445">
    <property type="entry name" value="ADDB_N"/>
    <property type="match status" value="1"/>
</dbReference>
<dbReference type="Pfam" id="PF12705">
    <property type="entry name" value="PDDEXK_1"/>
    <property type="match status" value="1"/>
</dbReference>
<dbReference type="Pfam" id="PF13361">
    <property type="entry name" value="UvrD_C"/>
    <property type="match status" value="1"/>
</dbReference>
<dbReference type="SUPFAM" id="SSF52540">
    <property type="entry name" value="P-loop containing nucleoside triphosphate hydrolases"/>
    <property type="match status" value="1"/>
</dbReference>
<dbReference type="PROSITE" id="PS51198">
    <property type="entry name" value="UVRD_HELICASE_ATP_BIND"/>
    <property type="match status" value="1"/>
</dbReference>
<dbReference type="PROSITE" id="PS51217">
    <property type="entry name" value="UVRD_HELICASE_CTER"/>
    <property type="match status" value="1"/>
</dbReference>
<evidence type="ECO:0000255" key="1">
    <source>
        <dbReference type="HAMAP-Rule" id="MF_01452"/>
    </source>
</evidence>
<protein>
    <recommendedName>
        <fullName evidence="1">ATP-dependent helicase/deoxyribonuclease subunit B</fullName>
        <ecNumber evidence="1">3.1.-.-</ecNumber>
    </recommendedName>
    <alternativeName>
        <fullName evidence="1">ATP-dependent helicase/nuclease subunit AddB</fullName>
    </alternativeName>
</protein>
<comment type="function">
    <text evidence="1">The heterodimer acts as both an ATP-dependent DNA helicase and an ATP-dependent, dual-direction single-stranded exonuclease. Recognizes the chi site generating a DNA molecule suitable for the initiation of homologous recombination. The AddB subunit has 5' -&gt; 3' nuclease activity but not helicase activity.</text>
</comment>
<comment type="cofactor">
    <cofactor evidence="1">
        <name>Mg(2+)</name>
        <dbReference type="ChEBI" id="CHEBI:18420"/>
    </cofactor>
</comment>
<comment type="cofactor">
    <cofactor evidence="1">
        <name>[4Fe-4S] cluster</name>
        <dbReference type="ChEBI" id="CHEBI:49883"/>
    </cofactor>
    <text evidence="1">Binds 1 [4Fe-4S] cluster.</text>
</comment>
<comment type="subunit">
    <text evidence="1">Heterodimer of AddA and AddB.</text>
</comment>
<comment type="miscellaneous">
    <text evidence="1">Despite having conserved helicase domains, this subunit does not have helicase activity.</text>
</comment>
<comment type="similarity">
    <text evidence="1">Belongs to the helicase family. AddB/RexB type 1 subfamily.</text>
</comment>
<keyword id="KW-0004">4Fe-4S</keyword>
<keyword id="KW-0067">ATP-binding</keyword>
<keyword id="KW-0227">DNA damage</keyword>
<keyword id="KW-0234">DNA repair</keyword>
<keyword id="KW-0238">DNA-binding</keyword>
<keyword id="KW-0269">Exonuclease</keyword>
<keyword id="KW-0347">Helicase</keyword>
<keyword id="KW-0378">Hydrolase</keyword>
<keyword id="KW-0408">Iron</keyword>
<keyword id="KW-0411">Iron-sulfur</keyword>
<keyword id="KW-0479">Metal-binding</keyword>
<keyword id="KW-0540">Nuclease</keyword>
<keyword id="KW-0547">Nucleotide-binding</keyword>
<keyword id="KW-1185">Reference proteome</keyword>
<gene>
    <name evidence="1" type="primary">addB</name>
    <name type="ordered locus">BC_1137</name>
</gene>
<name>ADDB_BACCR</name>